<organism>
    <name type="scientific">Mus musculus</name>
    <name type="common">Mouse</name>
    <dbReference type="NCBI Taxonomy" id="10090"/>
    <lineage>
        <taxon>Eukaryota</taxon>
        <taxon>Metazoa</taxon>
        <taxon>Chordata</taxon>
        <taxon>Craniata</taxon>
        <taxon>Vertebrata</taxon>
        <taxon>Euteleostomi</taxon>
        <taxon>Mammalia</taxon>
        <taxon>Eutheria</taxon>
        <taxon>Euarchontoglires</taxon>
        <taxon>Glires</taxon>
        <taxon>Rodentia</taxon>
        <taxon>Myomorpha</taxon>
        <taxon>Muroidea</taxon>
        <taxon>Muridae</taxon>
        <taxon>Murinae</taxon>
        <taxon>Mus</taxon>
        <taxon>Mus</taxon>
    </lineage>
</organism>
<comment type="subunit">
    <text evidence="2">Component of the mitochondrial ribosome large subunit (39S) which comprises a 16S rRNA and about 50 distinct proteins.</text>
</comment>
<comment type="subcellular location">
    <subcellularLocation>
        <location evidence="2">Mitochondrion</location>
    </subcellularLocation>
</comment>
<comment type="similarity">
    <text evidence="4">Belongs to the universal ribosomal protein uL30 family.</text>
</comment>
<proteinExistence type="evidence at protein level"/>
<dbReference type="EMBL" id="AK009074">
    <property type="protein sequence ID" value="BAB26057.1"/>
    <property type="molecule type" value="mRNA"/>
</dbReference>
<dbReference type="EMBL" id="AK089015">
    <property type="protein sequence ID" value="BAC40703.1"/>
    <property type="molecule type" value="mRNA"/>
</dbReference>
<dbReference type="EMBL" id="BC004614">
    <property type="protein sequence ID" value="AAH04614.1"/>
    <property type="molecule type" value="mRNA"/>
</dbReference>
<dbReference type="CCDS" id="CCDS14896.1"/>
<dbReference type="RefSeq" id="NP_001343411.1">
    <property type="nucleotide sequence ID" value="NM_001356482.2"/>
</dbReference>
<dbReference type="RefSeq" id="NP_081374.1">
    <property type="nucleotide sequence ID" value="NM_027098.4"/>
</dbReference>
<dbReference type="RefSeq" id="XP_006495675.1">
    <property type="nucleotide sequence ID" value="XM_006495612.2"/>
</dbReference>
<dbReference type="RefSeq" id="XP_011236719.1">
    <property type="nucleotide sequence ID" value="XM_011238417.3"/>
</dbReference>
<dbReference type="SMR" id="Q9D7N6"/>
<dbReference type="BioGRID" id="223527">
    <property type="interactions" value="7"/>
</dbReference>
<dbReference type="ComplexPortal" id="CPX-5302">
    <property type="entry name" value="39S mitochondrial large ribosomal subunit"/>
</dbReference>
<dbReference type="FunCoup" id="Q9D7N6">
    <property type="interactions" value="1765"/>
</dbReference>
<dbReference type="STRING" id="10090.ENSMUSP00000027256"/>
<dbReference type="iPTMnet" id="Q9D7N6"/>
<dbReference type="PhosphoSitePlus" id="Q9D7N6"/>
<dbReference type="PaxDb" id="10090-ENSMUSP00000027256"/>
<dbReference type="PeptideAtlas" id="Q9D7N6"/>
<dbReference type="ProteomicsDB" id="300522"/>
<dbReference type="Pumba" id="Q9D7N6"/>
<dbReference type="DNASU" id="107734"/>
<dbReference type="Ensembl" id="ENSMUST00000027256.12">
    <property type="protein sequence ID" value="ENSMUSP00000027256.6"/>
    <property type="gene ID" value="ENSMUSG00000026087.12"/>
</dbReference>
<dbReference type="Ensembl" id="ENSMUST00000193673.6">
    <property type="protein sequence ID" value="ENSMUSP00000141654.2"/>
    <property type="gene ID" value="ENSMUSG00000026087.12"/>
</dbReference>
<dbReference type="Ensembl" id="ENSMUST00000195373.2">
    <property type="protein sequence ID" value="ENSMUSP00000141693.2"/>
    <property type="gene ID" value="ENSMUSG00000026087.12"/>
</dbReference>
<dbReference type="GeneID" id="107734"/>
<dbReference type="KEGG" id="mmu:107734"/>
<dbReference type="UCSC" id="uc007asj.1">
    <property type="organism name" value="mouse"/>
</dbReference>
<dbReference type="AGR" id="MGI:1333820"/>
<dbReference type="CTD" id="51263"/>
<dbReference type="MGI" id="MGI:1333820">
    <property type="gene designation" value="Mrpl30"/>
</dbReference>
<dbReference type="VEuPathDB" id="HostDB:ENSMUSG00000026087"/>
<dbReference type="eggNOG" id="KOG4799">
    <property type="taxonomic scope" value="Eukaryota"/>
</dbReference>
<dbReference type="GeneTree" id="ENSGT00390000016769"/>
<dbReference type="InParanoid" id="Q9D7N6"/>
<dbReference type="OMA" id="VESFICT"/>
<dbReference type="OrthoDB" id="9973389at2759"/>
<dbReference type="PhylomeDB" id="Q9D7N6"/>
<dbReference type="TreeFam" id="TF314611"/>
<dbReference type="Reactome" id="R-MMU-5389840">
    <property type="pathway name" value="Mitochondrial translation elongation"/>
</dbReference>
<dbReference type="Reactome" id="R-MMU-5419276">
    <property type="pathway name" value="Mitochondrial translation termination"/>
</dbReference>
<dbReference type="BioGRID-ORCS" id="107734">
    <property type="hits" value="21 hits in 76 CRISPR screens"/>
</dbReference>
<dbReference type="ChiTaRS" id="Mrpl30">
    <property type="organism name" value="mouse"/>
</dbReference>
<dbReference type="PRO" id="PR:Q9D7N6"/>
<dbReference type="Proteomes" id="UP000000589">
    <property type="component" value="Chromosome 1"/>
</dbReference>
<dbReference type="RNAct" id="Q9D7N6">
    <property type="molecule type" value="protein"/>
</dbReference>
<dbReference type="Bgee" id="ENSMUSG00000026087">
    <property type="expression patterns" value="Expressed in digastric muscle group and 259 other cell types or tissues"/>
</dbReference>
<dbReference type="ExpressionAtlas" id="Q9D7N6">
    <property type="expression patterns" value="baseline and differential"/>
</dbReference>
<dbReference type="GO" id="GO:0005743">
    <property type="term" value="C:mitochondrial inner membrane"/>
    <property type="evidence" value="ECO:0000303"/>
    <property type="project" value="ComplexPortal"/>
</dbReference>
<dbReference type="GO" id="GO:0005762">
    <property type="term" value="C:mitochondrial large ribosomal subunit"/>
    <property type="evidence" value="ECO:0000250"/>
    <property type="project" value="UniProtKB"/>
</dbReference>
<dbReference type="GO" id="GO:0005761">
    <property type="term" value="C:mitochondrial ribosome"/>
    <property type="evidence" value="ECO:0000250"/>
    <property type="project" value="MGI"/>
</dbReference>
<dbReference type="GO" id="GO:0005739">
    <property type="term" value="C:mitochondrion"/>
    <property type="evidence" value="ECO:0007005"/>
    <property type="project" value="MGI"/>
</dbReference>
<dbReference type="GO" id="GO:0003735">
    <property type="term" value="F:structural constituent of ribosome"/>
    <property type="evidence" value="ECO:0007669"/>
    <property type="project" value="InterPro"/>
</dbReference>
<dbReference type="GO" id="GO:0032543">
    <property type="term" value="P:mitochondrial translation"/>
    <property type="evidence" value="ECO:0000303"/>
    <property type="project" value="ComplexPortal"/>
</dbReference>
<dbReference type="CDD" id="cd01658">
    <property type="entry name" value="Ribosomal_L30"/>
    <property type="match status" value="1"/>
</dbReference>
<dbReference type="FunFam" id="3.30.1390.20:FF:000005">
    <property type="entry name" value="39S ribosomal protein L30, mitochondrial"/>
    <property type="match status" value="1"/>
</dbReference>
<dbReference type="Gene3D" id="3.30.1390.20">
    <property type="entry name" value="Ribosomal protein L30, ferredoxin-like fold domain"/>
    <property type="match status" value="1"/>
</dbReference>
<dbReference type="InterPro" id="IPR036919">
    <property type="entry name" value="Ribo_uL30_ferredoxin-like_sf"/>
</dbReference>
<dbReference type="InterPro" id="IPR005996">
    <property type="entry name" value="Ribosomal_uL30_bac-type"/>
</dbReference>
<dbReference type="InterPro" id="IPR016082">
    <property type="entry name" value="Ribosomal_uL30_ferredoxin-like"/>
</dbReference>
<dbReference type="PANTHER" id="PTHR15892:SF2">
    <property type="entry name" value="LARGE RIBOSOMAL SUBUNIT PROTEIN UL30M"/>
    <property type="match status" value="1"/>
</dbReference>
<dbReference type="PANTHER" id="PTHR15892">
    <property type="entry name" value="MITOCHONDRIAL RIBOSOMAL PROTEIN L30"/>
    <property type="match status" value="1"/>
</dbReference>
<dbReference type="Pfam" id="PF00327">
    <property type="entry name" value="Ribosomal_L30"/>
    <property type="match status" value="1"/>
</dbReference>
<dbReference type="SUPFAM" id="SSF55129">
    <property type="entry name" value="Ribosomal protein L30p/L7e"/>
    <property type="match status" value="1"/>
</dbReference>
<gene>
    <name type="primary">Mrpl30</name>
</gene>
<accession>Q9D7N6</accession>
<accession>Q99KJ7</accession>
<reference key="1">
    <citation type="journal article" date="2005" name="Science">
        <title>The transcriptional landscape of the mammalian genome.</title>
        <authorList>
            <person name="Carninci P."/>
            <person name="Kasukawa T."/>
            <person name="Katayama S."/>
            <person name="Gough J."/>
            <person name="Frith M.C."/>
            <person name="Maeda N."/>
            <person name="Oyama R."/>
            <person name="Ravasi T."/>
            <person name="Lenhard B."/>
            <person name="Wells C."/>
            <person name="Kodzius R."/>
            <person name="Shimokawa K."/>
            <person name="Bajic V.B."/>
            <person name="Brenner S.E."/>
            <person name="Batalov S."/>
            <person name="Forrest A.R."/>
            <person name="Zavolan M."/>
            <person name="Davis M.J."/>
            <person name="Wilming L.G."/>
            <person name="Aidinis V."/>
            <person name="Allen J.E."/>
            <person name="Ambesi-Impiombato A."/>
            <person name="Apweiler R."/>
            <person name="Aturaliya R.N."/>
            <person name="Bailey T.L."/>
            <person name="Bansal M."/>
            <person name="Baxter L."/>
            <person name="Beisel K.W."/>
            <person name="Bersano T."/>
            <person name="Bono H."/>
            <person name="Chalk A.M."/>
            <person name="Chiu K.P."/>
            <person name="Choudhary V."/>
            <person name="Christoffels A."/>
            <person name="Clutterbuck D.R."/>
            <person name="Crowe M.L."/>
            <person name="Dalla E."/>
            <person name="Dalrymple B.P."/>
            <person name="de Bono B."/>
            <person name="Della Gatta G."/>
            <person name="di Bernardo D."/>
            <person name="Down T."/>
            <person name="Engstrom P."/>
            <person name="Fagiolini M."/>
            <person name="Faulkner G."/>
            <person name="Fletcher C.F."/>
            <person name="Fukushima T."/>
            <person name="Furuno M."/>
            <person name="Futaki S."/>
            <person name="Gariboldi M."/>
            <person name="Georgii-Hemming P."/>
            <person name="Gingeras T.R."/>
            <person name="Gojobori T."/>
            <person name="Green R.E."/>
            <person name="Gustincich S."/>
            <person name="Harbers M."/>
            <person name="Hayashi Y."/>
            <person name="Hensch T.K."/>
            <person name="Hirokawa N."/>
            <person name="Hill D."/>
            <person name="Huminiecki L."/>
            <person name="Iacono M."/>
            <person name="Ikeo K."/>
            <person name="Iwama A."/>
            <person name="Ishikawa T."/>
            <person name="Jakt M."/>
            <person name="Kanapin A."/>
            <person name="Katoh M."/>
            <person name="Kawasawa Y."/>
            <person name="Kelso J."/>
            <person name="Kitamura H."/>
            <person name="Kitano H."/>
            <person name="Kollias G."/>
            <person name="Krishnan S.P."/>
            <person name="Kruger A."/>
            <person name="Kummerfeld S.K."/>
            <person name="Kurochkin I.V."/>
            <person name="Lareau L.F."/>
            <person name="Lazarevic D."/>
            <person name="Lipovich L."/>
            <person name="Liu J."/>
            <person name="Liuni S."/>
            <person name="McWilliam S."/>
            <person name="Madan Babu M."/>
            <person name="Madera M."/>
            <person name="Marchionni L."/>
            <person name="Matsuda H."/>
            <person name="Matsuzawa S."/>
            <person name="Miki H."/>
            <person name="Mignone F."/>
            <person name="Miyake S."/>
            <person name="Morris K."/>
            <person name="Mottagui-Tabar S."/>
            <person name="Mulder N."/>
            <person name="Nakano N."/>
            <person name="Nakauchi H."/>
            <person name="Ng P."/>
            <person name="Nilsson R."/>
            <person name="Nishiguchi S."/>
            <person name="Nishikawa S."/>
            <person name="Nori F."/>
            <person name="Ohara O."/>
            <person name="Okazaki Y."/>
            <person name="Orlando V."/>
            <person name="Pang K.C."/>
            <person name="Pavan W.J."/>
            <person name="Pavesi G."/>
            <person name="Pesole G."/>
            <person name="Petrovsky N."/>
            <person name="Piazza S."/>
            <person name="Reed J."/>
            <person name="Reid J.F."/>
            <person name="Ring B.Z."/>
            <person name="Ringwald M."/>
            <person name="Rost B."/>
            <person name="Ruan Y."/>
            <person name="Salzberg S.L."/>
            <person name="Sandelin A."/>
            <person name="Schneider C."/>
            <person name="Schoenbach C."/>
            <person name="Sekiguchi K."/>
            <person name="Semple C.A."/>
            <person name="Seno S."/>
            <person name="Sessa L."/>
            <person name="Sheng Y."/>
            <person name="Shibata Y."/>
            <person name="Shimada H."/>
            <person name="Shimada K."/>
            <person name="Silva D."/>
            <person name="Sinclair B."/>
            <person name="Sperling S."/>
            <person name="Stupka E."/>
            <person name="Sugiura K."/>
            <person name="Sultana R."/>
            <person name="Takenaka Y."/>
            <person name="Taki K."/>
            <person name="Tammoja K."/>
            <person name="Tan S.L."/>
            <person name="Tang S."/>
            <person name="Taylor M.S."/>
            <person name="Tegner J."/>
            <person name="Teichmann S.A."/>
            <person name="Ueda H.R."/>
            <person name="van Nimwegen E."/>
            <person name="Verardo R."/>
            <person name="Wei C.L."/>
            <person name="Yagi K."/>
            <person name="Yamanishi H."/>
            <person name="Zabarovsky E."/>
            <person name="Zhu S."/>
            <person name="Zimmer A."/>
            <person name="Hide W."/>
            <person name="Bult C."/>
            <person name="Grimmond S.M."/>
            <person name="Teasdale R.D."/>
            <person name="Liu E.T."/>
            <person name="Brusic V."/>
            <person name="Quackenbush J."/>
            <person name="Wahlestedt C."/>
            <person name="Mattick J.S."/>
            <person name="Hume D.A."/>
            <person name="Kai C."/>
            <person name="Sasaki D."/>
            <person name="Tomaru Y."/>
            <person name="Fukuda S."/>
            <person name="Kanamori-Katayama M."/>
            <person name="Suzuki M."/>
            <person name="Aoki J."/>
            <person name="Arakawa T."/>
            <person name="Iida J."/>
            <person name="Imamura K."/>
            <person name="Itoh M."/>
            <person name="Kato T."/>
            <person name="Kawaji H."/>
            <person name="Kawagashira N."/>
            <person name="Kawashima T."/>
            <person name="Kojima M."/>
            <person name="Kondo S."/>
            <person name="Konno H."/>
            <person name="Nakano K."/>
            <person name="Ninomiya N."/>
            <person name="Nishio T."/>
            <person name="Okada M."/>
            <person name="Plessy C."/>
            <person name="Shibata K."/>
            <person name="Shiraki T."/>
            <person name="Suzuki S."/>
            <person name="Tagami M."/>
            <person name="Waki K."/>
            <person name="Watahiki A."/>
            <person name="Okamura-Oho Y."/>
            <person name="Suzuki H."/>
            <person name="Kawai J."/>
            <person name="Hayashizaki Y."/>
        </authorList>
    </citation>
    <scope>NUCLEOTIDE SEQUENCE [LARGE SCALE MRNA]</scope>
    <source>
        <strain>C57BL/6J</strain>
        <strain>NOD</strain>
        <tissue>Thymus</tissue>
        <tissue>Tongue</tissue>
    </source>
</reference>
<reference key="2">
    <citation type="journal article" date="2004" name="Genome Res.">
        <title>The status, quality, and expansion of the NIH full-length cDNA project: the Mammalian Gene Collection (MGC).</title>
        <authorList>
            <consortium name="The MGC Project Team"/>
        </authorList>
    </citation>
    <scope>NUCLEOTIDE SEQUENCE [LARGE SCALE MRNA]</scope>
    <source>
        <strain>FVB/N</strain>
        <tissue>Mammary tumor</tissue>
    </source>
</reference>
<reference key="3">
    <citation type="journal article" date="2010" name="Cell">
        <title>A tissue-specific atlas of mouse protein phosphorylation and expression.</title>
        <authorList>
            <person name="Huttlin E.L."/>
            <person name="Jedrychowski M.P."/>
            <person name="Elias J.E."/>
            <person name="Goswami T."/>
            <person name="Rad R."/>
            <person name="Beausoleil S.A."/>
            <person name="Villen J."/>
            <person name="Haas W."/>
            <person name="Sowa M.E."/>
            <person name="Gygi S.P."/>
        </authorList>
    </citation>
    <scope>IDENTIFICATION BY MASS SPECTROMETRY [LARGE SCALE ANALYSIS]</scope>
    <source>
        <tissue>Brain</tissue>
        <tissue>Brown adipose tissue</tissue>
        <tissue>Heart</tissue>
        <tissue>Kidney</tissue>
        <tissue>Liver</tissue>
    </source>
</reference>
<keyword id="KW-0496">Mitochondrion</keyword>
<keyword id="KW-1185">Reference proteome</keyword>
<keyword id="KW-0687">Ribonucleoprotein</keyword>
<keyword id="KW-0689">Ribosomal protein</keyword>
<keyword id="KW-0809">Transit peptide</keyword>
<protein>
    <recommendedName>
        <fullName evidence="4">Large ribosomal subunit protein uL30m</fullName>
    </recommendedName>
    <alternativeName>
        <fullName>39S ribosomal protein L30, mitochondrial</fullName>
        <shortName>L30mt</shortName>
        <shortName>MRP-L30</shortName>
    </alternativeName>
</protein>
<evidence type="ECO:0000250" key="1"/>
<evidence type="ECO:0000250" key="2">
    <source>
        <dbReference type="UniProtKB" id="Q8TCC3"/>
    </source>
</evidence>
<evidence type="ECO:0000256" key="3">
    <source>
        <dbReference type="SAM" id="MobiDB-lite"/>
    </source>
</evidence>
<evidence type="ECO:0000305" key="4"/>
<feature type="transit peptide" description="Mitochondrion" evidence="1">
    <location>
        <begin position="1"/>
        <end position="34"/>
    </location>
</feature>
<feature type="chain" id="PRO_0000273241" description="Large ribosomal subunit protein uL30m">
    <location>
        <begin position="35"/>
        <end position="160"/>
    </location>
</feature>
<feature type="region of interest" description="Disordered" evidence="3">
    <location>
        <begin position="44"/>
        <end position="64"/>
    </location>
</feature>
<feature type="sequence conflict" description="In Ref. 2; AAH04614." evidence="4" ref="2">
    <original>P</original>
    <variation>Q</variation>
    <location>
        <position position="10"/>
    </location>
</feature>
<name>RM30_MOUSE</name>
<sequence length="160" mass="18342">MAGVLRSAFPRPPCRLQTVKKGAESLIGTEWIRHKFTKSRIPDKVFQPKPEDHEKYGGDPQNPHKLHIVTRIRSTKRRPYWEKDTIKMLGLQKAHSPQIHKNIPSVNAKLKVVKHLIRIQPLKLPQGLPTEETMSSTCLKSTGELVVQWHLKPVEQEAKS</sequence>